<organism>
    <name type="scientific">Neisseria meningitidis serogroup A / serotype 4A (strain DSM 15465 / Z2491)</name>
    <dbReference type="NCBI Taxonomy" id="122587"/>
    <lineage>
        <taxon>Bacteria</taxon>
        <taxon>Pseudomonadati</taxon>
        <taxon>Pseudomonadota</taxon>
        <taxon>Betaproteobacteria</taxon>
        <taxon>Neisseriales</taxon>
        <taxon>Neisseriaceae</taxon>
        <taxon>Neisseria</taxon>
    </lineage>
</organism>
<accession>Q9JX72</accession>
<accession>A1INQ4</accession>
<accession>Q9JPK5</accession>
<sequence>MSDNRLDTARHHSLFLARQLDNGKLKPEIFLPMLDKVLTEADFQAFADWDKIRAEENEEELARQLRELRRYVVSQIIVRDINRISDLNEVTRTITLFADFAVNTALDFAYAYYRDMYGTPIGRYTKSPQHLSVVAMGKAGGYELNVSSDIDLIFVYPESGDTDGRRERGNQEFFTKVGQKLIALLNDITADGQVFRVDMRLRPDGDSGALVLSETALEQYLITQGREWERYAWCKGRVVTPYPNGIKSLVRPFVFRKYLDYSAYEAMRKLHRQISSEVSKKGMADNIKLGAGGIREVEFIAQIFQMIRGGQMRALQLKGTQETLKKLAETGIMPSENVETLLAAYRFLRDVEHRLQYWDDQQTQTLPTSPEQRQLLAESMGFDSYSAFSDGLNIHRNKVNQLFNEILSEPEEQTQDNSEWQWAWQEKPDEEERLGRLKEYGFDAETIATRLDQIRNGHKYRHLSAHAQPRFDAIVPLFVQAAAEQNNPTDTLMRLLDFLENISRRSAYLAFLNEHPQTLAQLAQIMGQSSWVAAYLNKYPILLDELISAQLLDTAFDWQALAAALSDDLKACGGDTEAQMDTLRRFQHAQVFRLAVQDLAGLWTVESLSDQLSALADTILAAALLCAWADMPKKHRDTPQFAIVGYGKLGGKELGYASDLDLVYLYDDPHPDAGDVYSRLARRLTNWLSTATGAGSLYETDLRLRPNGDAGFLAHSIAAFEKYQRENAWTWEHQSLTRARFICGTPEIQTAFDRIRTEILTAERDQTALSGEIIEMREKMFPTHPPADSNVKYARGGVVDVEFIVQYLILAHARQYPQLLDNYGNIALLNIAADCGLIDKTLAGQSRTAYRFYRRQQHNTKLRDAKKTEVTGELLAHYGNVRKLWREVFGEEAATA</sequence>
<proteinExistence type="inferred from homology"/>
<reference key="1">
    <citation type="journal article" date="2000" name="Nature">
        <title>Complete DNA sequence of a serogroup A strain of Neisseria meningitidis Z2491.</title>
        <authorList>
            <person name="Parkhill J."/>
            <person name="Achtman M."/>
            <person name="James K.D."/>
            <person name="Bentley S.D."/>
            <person name="Churcher C.M."/>
            <person name="Klee S.R."/>
            <person name="Morelli G."/>
            <person name="Basham D."/>
            <person name="Brown D."/>
            <person name="Chillingworth T."/>
            <person name="Davies R.M."/>
            <person name="Davis P."/>
            <person name="Devlin K."/>
            <person name="Feltwell T."/>
            <person name="Hamlin N."/>
            <person name="Holroyd S."/>
            <person name="Jagels K."/>
            <person name="Leather S."/>
            <person name="Moule S."/>
            <person name="Mungall K.L."/>
            <person name="Quail M.A."/>
            <person name="Rajandream M.A."/>
            <person name="Rutherford K.M."/>
            <person name="Simmonds M."/>
            <person name="Skelton J."/>
            <person name="Whitehead S."/>
            <person name="Spratt B.G."/>
            <person name="Barrell B.G."/>
        </authorList>
    </citation>
    <scope>NUCLEOTIDE SEQUENCE [LARGE SCALE GENOMIC DNA]</scope>
    <source>
        <strain>DSM 15465 / Z2491</strain>
    </source>
</reference>
<reference key="2">
    <citation type="journal article" date="2000" name="Infect. Immun.">
        <title>Molecular and biological analysis of eight genetic islands that distinguish Neisseria meningitidis from the closely related pathogen Neisseria gonorrhoeae.</title>
        <authorList>
            <person name="Klee S.R."/>
            <person name="Nassif X."/>
            <person name="Kusecek B."/>
            <person name="Merker P."/>
            <person name="Beretti J.-L."/>
            <person name="Achtman M."/>
            <person name="Tinsley C.R."/>
        </authorList>
    </citation>
    <scope>NUCLEOTIDE SEQUENCE [GENOMIC DNA] OF 179-896</scope>
    <source>
        <strain>DSM 15465 / Z2491</strain>
    </source>
</reference>
<feature type="chain" id="PRO_0000209258" description="Bifunctional glutamine synthetase adenylyltransferase/adenylyl-removing enzyme">
    <location>
        <begin position="1"/>
        <end position="896"/>
    </location>
</feature>
<feature type="region of interest" description="Adenylyl removase" evidence="1">
    <location>
        <begin position="1"/>
        <end position="411"/>
    </location>
</feature>
<feature type="region of interest" description="Adenylyl transferase" evidence="1">
    <location>
        <begin position="417"/>
        <end position="896"/>
    </location>
</feature>
<name>GLNE_NEIMA</name>
<protein>
    <recommendedName>
        <fullName evidence="1">Bifunctional glutamine synthetase adenylyltransferase/adenylyl-removing enzyme</fullName>
    </recommendedName>
    <alternativeName>
        <fullName evidence="1">ATP:glutamine synthetase adenylyltransferase</fullName>
    </alternativeName>
    <alternativeName>
        <fullName evidence="1">ATase</fullName>
    </alternativeName>
    <domain>
        <recommendedName>
            <fullName evidence="1">Glutamine synthetase adenylyl-L-tyrosine phosphorylase</fullName>
            <ecNumber evidence="1">2.7.7.89</ecNumber>
        </recommendedName>
        <alternativeName>
            <fullName evidence="1">Adenylyl removase</fullName>
            <shortName evidence="1">AR</shortName>
            <shortName evidence="1">AT-N</shortName>
        </alternativeName>
    </domain>
    <domain>
        <recommendedName>
            <fullName evidence="1">Glutamine synthetase adenylyl transferase</fullName>
            <ecNumber evidence="1">2.7.7.42</ecNumber>
        </recommendedName>
        <alternativeName>
            <fullName evidence="1">Adenylyl transferase</fullName>
            <shortName evidence="1">AT</shortName>
            <shortName evidence="1">AT-C</shortName>
        </alternativeName>
    </domain>
</protein>
<dbReference type="EC" id="2.7.7.89" evidence="1"/>
<dbReference type="EC" id="2.7.7.42" evidence="1"/>
<dbReference type="EMBL" id="AL157959">
    <property type="protein sequence ID" value="CAM07361.1"/>
    <property type="molecule type" value="Genomic_DNA"/>
</dbReference>
<dbReference type="EMBL" id="AJ391262">
    <property type="protein sequence ID" value="CAB72042.1"/>
    <property type="molecule type" value="Genomic_DNA"/>
</dbReference>
<dbReference type="PIR" id="E81994">
    <property type="entry name" value="E81994"/>
</dbReference>
<dbReference type="RefSeq" id="WP_002246770.1">
    <property type="nucleotide sequence ID" value="NC_003116.1"/>
</dbReference>
<dbReference type="SMR" id="Q9JX72"/>
<dbReference type="EnsemblBacteria" id="CAM07361">
    <property type="protein sequence ID" value="CAM07361"/>
    <property type="gene ID" value="NMA0035"/>
</dbReference>
<dbReference type="KEGG" id="nma:NMA0035"/>
<dbReference type="HOGENOM" id="CLU_006233_0_1_4"/>
<dbReference type="Proteomes" id="UP000000626">
    <property type="component" value="Chromosome"/>
</dbReference>
<dbReference type="GO" id="GO:0005829">
    <property type="term" value="C:cytosol"/>
    <property type="evidence" value="ECO:0007669"/>
    <property type="project" value="TreeGrafter"/>
</dbReference>
<dbReference type="GO" id="GO:0008882">
    <property type="term" value="F:[glutamate-ammonia-ligase] adenylyltransferase activity"/>
    <property type="evidence" value="ECO:0007669"/>
    <property type="project" value="UniProtKB-UniRule"/>
</dbReference>
<dbReference type="GO" id="GO:0047388">
    <property type="term" value="F:[glutamine synthetase]-adenylyl-L-tyrosine phosphorylase activity"/>
    <property type="evidence" value="ECO:0007669"/>
    <property type="project" value="UniProtKB-EC"/>
</dbReference>
<dbReference type="GO" id="GO:0005524">
    <property type="term" value="F:ATP binding"/>
    <property type="evidence" value="ECO:0007669"/>
    <property type="project" value="UniProtKB-UniRule"/>
</dbReference>
<dbReference type="GO" id="GO:0000287">
    <property type="term" value="F:magnesium ion binding"/>
    <property type="evidence" value="ECO:0007669"/>
    <property type="project" value="UniProtKB-UniRule"/>
</dbReference>
<dbReference type="GO" id="GO:0000820">
    <property type="term" value="P:regulation of glutamine family amino acid metabolic process"/>
    <property type="evidence" value="ECO:0007669"/>
    <property type="project" value="UniProtKB-UniRule"/>
</dbReference>
<dbReference type="CDD" id="cd05401">
    <property type="entry name" value="NT_GlnE_GlnD_like"/>
    <property type="match status" value="2"/>
</dbReference>
<dbReference type="FunFam" id="1.20.120.330:FF:000005">
    <property type="entry name" value="Bifunctional glutamine synthetase adenylyltransferase/adenylyl-removing enzyme"/>
    <property type="match status" value="1"/>
</dbReference>
<dbReference type="FunFam" id="3.30.460.10:FF:000009">
    <property type="entry name" value="Bifunctional glutamine synthetase adenylyltransferase/adenylyl-removing enzyme"/>
    <property type="match status" value="2"/>
</dbReference>
<dbReference type="Gene3D" id="1.20.120.1510">
    <property type="match status" value="1"/>
</dbReference>
<dbReference type="Gene3D" id="3.30.460.10">
    <property type="entry name" value="Beta Polymerase, domain 2"/>
    <property type="match status" value="2"/>
</dbReference>
<dbReference type="Gene3D" id="1.20.120.330">
    <property type="entry name" value="Nucleotidyltransferases domain 2"/>
    <property type="match status" value="2"/>
</dbReference>
<dbReference type="HAMAP" id="MF_00802">
    <property type="entry name" value="GlnE"/>
    <property type="match status" value="1"/>
</dbReference>
<dbReference type="InterPro" id="IPR023057">
    <property type="entry name" value="GlnE"/>
</dbReference>
<dbReference type="InterPro" id="IPR005190">
    <property type="entry name" value="GlnE_rpt_dom"/>
</dbReference>
<dbReference type="InterPro" id="IPR043519">
    <property type="entry name" value="NT_sf"/>
</dbReference>
<dbReference type="InterPro" id="IPR013546">
    <property type="entry name" value="PII_UdlTrfase/GS_AdlTrfase"/>
</dbReference>
<dbReference type="NCBIfam" id="NF008292">
    <property type="entry name" value="PRK11072.1"/>
    <property type="match status" value="1"/>
</dbReference>
<dbReference type="PANTHER" id="PTHR30621:SF0">
    <property type="entry name" value="BIFUNCTIONAL GLUTAMINE SYNTHETASE ADENYLYLTRANSFERASE_ADENYLYL-REMOVING ENZYME"/>
    <property type="match status" value="1"/>
</dbReference>
<dbReference type="PANTHER" id="PTHR30621">
    <property type="entry name" value="GLUTAMINE SYNTHETASE ADENYLYLTRANSFERASE"/>
    <property type="match status" value="1"/>
</dbReference>
<dbReference type="Pfam" id="PF08335">
    <property type="entry name" value="GlnD_UR_UTase"/>
    <property type="match status" value="2"/>
</dbReference>
<dbReference type="Pfam" id="PF03710">
    <property type="entry name" value="GlnE"/>
    <property type="match status" value="2"/>
</dbReference>
<dbReference type="SUPFAM" id="SSF81301">
    <property type="entry name" value="Nucleotidyltransferase"/>
    <property type="match status" value="2"/>
</dbReference>
<dbReference type="SUPFAM" id="SSF81593">
    <property type="entry name" value="Nucleotidyltransferase substrate binding subunit/domain"/>
    <property type="match status" value="2"/>
</dbReference>
<gene>
    <name evidence="1" type="primary">glnE</name>
    <name type="ordered locus">NMA0035</name>
</gene>
<keyword id="KW-0067">ATP-binding</keyword>
<keyword id="KW-0460">Magnesium</keyword>
<keyword id="KW-0511">Multifunctional enzyme</keyword>
<keyword id="KW-0547">Nucleotide-binding</keyword>
<keyword id="KW-0548">Nucleotidyltransferase</keyword>
<keyword id="KW-0808">Transferase</keyword>
<evidence type="ECO:0000255" key="1">
    <source>
        <dbReference type="HAMAP-Rule" id="MF_00802"/>
    </source>
</evidence>
<comment type="function">
    <text evidence="1">Involved in the regulation of glutamine synthetase GlnA, a key enzyme in the process to assimilate ammonia. When cellular nitrogen levels are high, the C-terminal adenylyl transferase (AT) inactivates GlnA by covalent transfer of an adenylyl group from ATP to specific tyrosine residue of GlnA, thus reducing its activity. Conversely, when nitrogen levels are low, the N-terminal adenylyl removase (AR) activates GlnA by removing the adenylyl group by phosphorolysis, increasing its activity. The regulatory region of GlnE binds the signal transduction protein PII (GlnB) which indicates the nitrogen status of the cell.</text>
</comment>
<comment type="catalytic activity">
    <reaction evidence="1">
        <text>[glutamine synthetase]-O(4)-(5'-adenylyl)-L-tyrosine + phosphate = [glutamine synthetase]-L-tyrosine + ADP</text>
        <dbReference type="Rhea" id="RHEA:43716"/>
        <dbReference type="Rhea" id="RHEA-COMP:10660"/>
        <dbReference type="Rhea" id="RHEA-COMP:10661"/>
        <dbReference type="ChEBI" id="CHEBI:43474"/>
        <dbReference type="ChEBI" id="CHEBI:46858"/>
        <dbReference type="ChEBI" id="CHEBI:83624"/>
        <dbReference type="ChEBI" id="CHEBI:456216"/>
        <dbReference type="EC" id="2.7.7.89"/>
    </reaction>
</comment>
<comment type="catalytic activity">
    <reaction evidence="1">
        <text>[glutamine synthetase]-L-tyrosine + ATP = [glutamine synthetase]-O(4)-(5'-adenylyl)-L-tyrosine + diphosphate</text>
        <dbReference type="Rhea" id="RHEA:18589"/>
        <dbReference type="Rhea" id="RHEA-COMP:10660"/>
        <dbReference type="Rhea" id="RHEA-COMP:10661"/>
        <dbReference type="ChEBI" id="CHEBI:30616"/>
        <dbReference type="ChEBI" id="CHEBI:33019"/>
        <dbReference type="ChEBI" id="CHEBI:46858"/>
        <dbReference type="ChEBI" id="CHEBI:83624"/>
        <dbReference type="EC" id="2.7.7.42"/>
    </reaction>
</comment>
<comment type="cofactor">
    <cofactor evidence="1">
        <name>Mg(2+)</name>
        <dbReference type="ChEBI" id="CHEBI:18420"/>
    </cofactor>
</comment>
<comment type="similarity">
    <text evidence="1">Belongs to the GlnE family.</text>
</comment>